<gene>
    <name evidence="1" type="primary">lutA</name>
    <name type="ordered locus">Bsph_2259</name>
</gene>
<dbReference type="EMBL" id="CP000817">
    <property type="protein sequence ID" value="ACA39824.1"/>
    <property type="molecule type" value="Genomic_DNA"/>
</dbReference>
<dbReference type="SMR" id="B1HVX6"/>
<dbReference type="EnsemblBacteria" id="ACA39824">
    <property type="protein sequence ID" value="ACA39824"/>
    <property type="gene ID" value="Bsph_2259"/>
</dbReference>
<dbReference type="KEGG" id="lsp:Bsph_2259"/>
<dbReference type="HOGENOM" id="CLU_023081_1_0_9"/>
<dbReference type="Proteomes" id="UP000002164">
    <property type="component" value="Chromosome"/>
</dbReference>
<dbReference type="GO" id="GO:0005829">
    <property type="term" value="C:cytosol"/>
    <property type="evidence" value="ECO:0007669"/>
    <property type="project" value="TreeGrafter"/>
</dbReference>
<dbReference type="GO" id="GO:0016491">
    <property type="term" value="F:oxidoreductase activity"/>
    <property type="evidence" value="ECO:0007669"/>
    <property type="project" value="UniProtKB-ARBA"/>
</dbReference>
<dbReference type="GO" id="GO:0006089">
    <property type="term" value="P:lactate metabolic process"/>
    <property type="evidence" value="ECO:0007669"/>
    <property type="project" value="UniProtKB-UniRule"/>
</dbReference>
<dbReference type="HAMAP" id="MF_02105">
    <property type="entry name" value="LutA"/>
    <property type="match status" value="1"/>
</dbReference>
<dbReference type="InterPro" id="IPR004017">
    <property type="entry name" value="Cys_rich_dom"/>
</dbReference>
<dbReference type="InterPro" id="IPR022822">
    <property type="entry name" value="LutA"/>
</dbReference>
<dbReference type="PANTHER" id="PTHR30296:SF0">
    <property type="entry name" value="LACTATE UTILIZATION PROTEIN A"/>
    <property type="match status" value="1"/>
</dbReference>
<dbReference type="PANTHER" id="PTHR30296">
    <property type="entry name" value="UNCHARACTERIZED PROTEIN YKGE"/>
    <property type="match status" value="1"/>
</dbReference>
<dbReference type="Pfam" id="PF02754">
    <property type="entry name" value="CCG"/>
    <property type="match status" value="2"/>
</dbReference>
<evidence type="ECO:0000255" key="1">
    <source>
        <dbReference type="HAMAP-Rule" id="MF_02105"/>
    </source>
</evidence>
<organism>
    <name type="scientific">Lysinibacillus sphaericus (strain C3-41)</name>
    <dbReference type="NCBI Taxonomy" id="444177"/>
    <lineage>
        <taxon>Bacteria</taxon>
        <taxon>Bacillati</taxon>
        <taxon>Bacillota</taxon>
        <taxon>Bacilli</taxon>
        <taxon>Bacillales</taxon>
        <taxon>Bacillaceae</taxon>
        <taxon>Lysinibacillus</taxon>
    </lineage>
</organism>
<name>LUTA_LYSSC</name>
<comment type="function">
    <text evidence="1">Is involved in L-lactate degradation and allows cells to grow with lactate as the sole carbon source.</text>
</comment>
<comment type="similarity">
    <text evidence="1">Belongs to the LutA/YkgE family.</text>
</comment>
<feature type="chain" id="PRO_0000384051" description="Lactate utilization protein A">
    <location>
        <begin position="1"/>
        <end position="228"/>
    </location>
</feature>
<proteinExistence type="inferred from homology"/>
<accession>B1HVX6</accession>
<reference key="1">
    <citation type="journal article" date="2008" name="J. Bacteriol.">
        <title>Complete genome sequence of the mosquitocidal bacterium Bacillus sphaericus C3-41 and comparison with those of closely related Bacillus species.</title>
        <authorList>
            <person name="Hu X."/>
            <person name="Fan W."/>
            <person name="Han B."/>
            <person name="Liu H."/>
            <person name="Zheng D."/>
            <person name="Li Q."/>
            <person name="Dong W."/>
            <person name="Yan J."/>
            <person name="Gao M."/>
            <person name="Berry C."/>
            <person name="Yuan Z."/>
        </authorList>
    </citation>
    <scope>NUCLEOTIDE SEQUENCE [LARGE SCALE GENOMIC DNA]</scope>
    <source>
        <strain>C3-41</strain>
    </source>
</reference>
<protein>
    <recommendedName>
        <fullName evidence="1">Lactate utilization protein A</fullName>
    </recommendedName>
</protein>
<sequence>MDMFQGDIGKSVVEVLERLCCEIDSPEQQICCGQPAYNSGYVKESKNAMKRMITAFEHADYVVSPSGSCVYMFKEYPEIFKGDPLWASKAKALAAKTYEFTEFIVHVLKIEDVGAHLEGKATYHTSCHMTRLLGVNEAPIKLLQNVDGLQYVELPGKDRCCGFGGTFSVKMGNISGEMVQEKVHHVEETGADYLIGADAGCLINMGGRIHRQGKPIKVMHIAEVLNCR</sequence>